<reference key="1">
    <citation type="journal article" date="2006" name="Comput. Biol. Med.">
        <title>Identification of mouse mslp2 gene from EST databases by repeated searching, comparison, and assembling.</title>
        <authorList>
            <person name="Chan W.L."/>
            <person name="Chang J.G."/>
            <person name="Chen Y.F."/>
            <person name="Chan Y.K."/>
            <person name="Chu Y.P."/>
        </authorList>
    </citation>
    <scope>NUCLEOTIDE SEQUENCE [MRNA]</scope>
    <source>
        <strain>FVB/NJ</strain>
        <tissue>Kidney</tissue>
    </source>
</reference>
<reference key="2">
    <citation type="journal article" date="2005" name="Science">
        <title>The transcriptional landscape of the mammalian genome.</title>
        <authorList>
            <person name="Carninci P."/>
            <person name="Kasukawa T."/>
            <person name="Katayama S."/>
            <person name="Gough J."/>
            <person name="Frith M.C."/>
            <person name="Maeda N."/>
            <person name="Oyama R."/>
            <person name="Ravasi T."/>
            <person name="Lenhard B."/>
            <person name="Wells C."/>
            <person name="Kodzius R."/>
            <person name="Shimokawa K."/>
            <person name="Bajic V.B."/>
            <person name="Brenner S.E."/>
            <person name="Batalov S."/>
            <person name="Forrest A.R."/>
            <person name="Zavolan M."/>
            <person name="Davis M.J."/>
            <person name="Wilming L.G."/>
            <person name="Aidinis V."/>
            <person name="Allen J.E."/>
            <person name="Ambesi-Impiombato A."/>
            <person name="Apweiler R."/>
            <person name="Aturaliya R.N."/>
            <person name="Bailey T.L."/>
            <person name="Bansal M."/>
            <person name="Baxter L."/>
            <person name="Beisel K.W."/>
            <person name="Bersano T."/>
            <person name="Bono H."/>
            <person name="Chalk A.M."/>
            <person name="Chiu K.P."/>
            <person name="Choudhary V."/>
            <person name="Christoffels A."/>
            <person name="Clutterbuck D.R."/>
            <person name="Crowe M.L."/>
            <person name="Dalla E."/>
            <person name="Dalrymple B.P."/>
            <person name="de Bono B."/>
            <person name="Della Gatta G."/>
            <person name="di Bernardo D."/>
            <person name="Down T."/>
            <person name="Engstrom P."/>
            <person name="Fagiolini M."/>
            <person name="Faulkner G."/>
            <person name="Fletcher C.F."/>
            <person name="Fukushima T."/>
            <person name="Furuno M."/>
            <person name="Futaki S."/>
            <person name="Gariboldi M."/>
            <person name="Georgii-Hemming P."/>
            <person name="Gingeras T.R."/>
            <person name="Gojobori T."/>
            <person name="Green R.E."/>
            <person name="Gustincich S."/>
            <person name="Harbers M."/>
            <person name="Hayashi Y."/>
            <person name="Hensch T.K."/>
            <person name="Hirokawa N."/>
            <person name="Hill D."/>
            <person name="Huminiecki L."/>
            <person name="Iacono M."/>
            <person name="Ikeo K."/>
            <person name="Iwama A."/>
            <person name="Ishikawa T."/>
            <person name="Jakt M."/>
            <person name="Kanapin A."/>
            <person name="Katoh M."/>
            <person name="Kawasawa Y."/>
            <person name="Kelso J."/>
            <person name="Kitamura H."/>
            <person name="Kitano H."/>
            <person name="Kollias G."/>
            <person name="Krishnan S.P."/>
            <person name="Kruger A."/>
            <person name="Kummerfeld S.K."/>
            <person name="Kurochkin I.V."/>
            <person name="Lareau L.F."/>
            <person name="Lazarevic D."/>
            <person name="Lipovich L."/>
            <person name="Liu J."/>
            <person name="Liuni S."/>
            <person name="McWilliam S."/>
            <person name="Madan Babu M."/>
            <person name="Madera M."/>
            <person name="Marchionni L."/>
            <person name="Matsuda H."/>
            <person name="Matsuzawa S."/>
            <person name="Miki H."/>
            <person name="Mignone F."/>
            <person name="Miyake S."/>
            <person name="Morris K."/>
            <person name="Mottagui-Tabar S."/>
            <person name="Mulder N."/>
            <person name="Nakano N."/>
            <person name="Nakauchi H."/>
            <person name="Ng P."/>
            <person name="Nilsson R."/>
            <person name="Nishiguchi S."/>
            <person name="Nishikawa S."/>
            <person name="Nori F."/>
            <person name="Ohara O."/>
            <person name="Okazaki Y."/>
            <person name="Orlando V."/>
            <person name="Pang K.C."/>
            <person name="Pavan W.J."/>
            <person name="Pavesi G."/>
            <person name="Pesole G."/>
            <person name="Petrovsky N."/>
            <person name="Piazza S."/>
            <person name="Reed J."/>
            <person name="Reid J.F."/>
            <person name="Ring B.Z."/>
            <person name="Ringwald M."/>
            <person name="Rost B."/>
            <person name="Ruan Y."/>
            <person name="Salzberg S.L."/>
            <person name="Sandelin A."/>
            <person name="Schneider C."/>
            <person name="Schoenbach C."/>
            <person name="Sekiguchi K."/>
            <person name="Semple C.A."/>
            <person name="Seno S."/>
            <person name="Sessa L."/>
            <person name="Sheng Y."/>
            <person name="Shibata Y."/>
            <person name="Shimada H."/>
            <person name="Shimada K."/>
            <person name="Silva D."/>
            <person name="Sinclair B."/>
            <person name="Sperling S."/>
            <person name="Stupka E."/>
            <person name="Sugiura K."/>
            <person name="Sultana R."/>
            <person name="Takenaka Y."/>
            <person name="Taki K."/>
            <person name="Tammoja K."/>
            <person name="Tan S.L."/>
            <person name="Tang S."/>
            <person name="Taylor M.S."/>
            <person name="Tegner J."/>
            <person name="Teichmann S.A."/>
            <person name="Ueda H.R."/>
            <person name="van Nimwegen E."/>
            <person name="Verardo R."/>
            <person name="Wei C.L."/>
            <person name="Yagi K."/>
            <person name="Yamanishi H."/>
            <person name="Zabarovsky E."/>
            <person name="Zhu S."/>
            <person name="Zimmer A."/>
            <person name="Hide W."/>
            <person name="Bult C."/>
            <person name="Grimmond S.M."/>
            <person name="Teasdale R.D."/>
            <person name="Liu E.T."/>
            <person name="Brusic V."/>
            <person name="Quackenbush J."/>
            <person name="Wahlestedt C."/>
            <person name="Mattick J.S."/>
            <person name="Hume D.A."/>
            <person name="Kai C."/>
            <person name="Sasaki D."/>
            <person name="Tomaru Y."/>
            <person name="Fukuda S."/>
            <person name="Kanamori-Katayama M."/>
            <person name="Suzuki M."/>
            <person name="Aoki J."/>
            <person name="Arakawa T."/>
            <person name="Iida J."/>
            <person name="Imamura K."/>
            <person name="Itoh M."/>
            <person name="Kato T."/>
            <person name="Kawaji H."/>
            <person name="Kawagashira N."/>
            <person name="Kawashima T."/>
            <person name="Kojima M."/>
            <person name="Kondo S."/>
            <person name="Konno H."/>
            <person name="Nakano K."/>
            <person name="Ninomiya N."/>
            <person name="Nishio T."/>
            <person name="Okada M."/>
            <person name="Plessy C."/>
            <person name="Shibata K."/>
            <person name="Shiraki T."/>
            <person name="Suzuki S."/>
            <person name="Tagami M."/>
            <person name="Waki K."/>
            <person name="Watahiki A."/>
            <person name="Okamura-Oho Y."/>
            <person name="Suzuki H."/>
            <person name="Kawai J."/>
            <person name="Hayashizaki Y."/>
        </authorList>
    </citation>
    <scope>NUCLEOTIDE SEQUENCE [LARGE SCALE MRNA]</scope>
    <source>
        <strain>C57BL/6J</strain>
        <tissue>Kidney</tissue>
    </source>
</reference>
<reference key="3">
    <citation type="journal article" date="2004" name="Genome Res.">
        <title>The status, quality, and expansion of the NIH full-length cDNA project: the Mammalian Gene Collection (MGC).</title>
        <authorList>
            <consortium name="The MGC Project Team"/>
        </authorList>
    </citation>
    <scope>NUCLEOTIDE SEQUENCE [LARGE SCALE MRNA]</scope>
    <source>
        <strain>FVB/N</strain>
        <strain>FVB/N-3</strain>
        <tissue>Mammary tumor</tissue>
    </source>
</reference>
<reference key="4">
    <citation type="journal article" date="2006" name="J. Neurosci.">
        <title>The calcium channel alpha2delta-2 subunit partitions with CaV2.1 into lipid rafts in cerebellum: implications for localization and function.</title>
        <authorList>
            <person name="Davies A."/>
            <person name="Douglas L."/>
            <person name="Hendrich J."/>
            <person name="Wratten J."/>
            <person name="Tran Van Minh A."/>
            <person name="Foucault I."/>
            <person name="Koch D."/>
            <person name="Pratt W.S."/>
            <person name="Saibil H.R."/>
            <person name="Dolphin A.C."/>
        </authorList>
    </citation>
    <scope>INTERACTION WITH CACNA2D2</scope>
</reference>
<reference key="5">
    <citation type="journal article" date="2009" name="EMBO J.">
        <title>SLP-2 is required for stress-induced mitochondrial hyperfusion.</title>
        <authorList>
            <person name="Tondera D."/>
            <person name="Grandemange S."/>
            <person name="Jourdain A."/>
            <person name="Karbowski M."/>
            <person name="Mattenberger Y."/>
            <person name="Herzig S."/>
            <person name="Da Cruz S."/>
            <person name="Clerc P."/>
            <person name="Raschke I."/>
            <person name="Merkwirth C."/>
            <person name="Ehses S."/>
            <person name="Krause F."/>
            <person name="Chan D.C."/>
            <person name="Alexander C."/>
            <person name="Bauer C."/>
            <person name="Youle R."/>
            <person name="Langer T."/>
            <person name="Martinou J.C."/>
        </authorList>
    </citation>
    <scope>FUNCTION IN MITOCHONDRIAL FUSION</scope>
</reference>
<reference key="6">
    <citation type="journal article" date="2010" name="Cell">
        <title>A tissue-specific atlas of mouse protein phosphorylation and expression.</title>
        <authorList>
            <person name="Huttlin E.L."/>
            <person name="Jedrychowski M.P."/>
            <person name="Elias J.E."/>
            <person name="Goswami T."/>
            <person name="Rad R."/>
            <person name="Beausoleil S.A."/>
            <person name="Villen J."/>
            <person name="Haas W."/>
            <person name="Sowa M.E."/>
            <person name="Gygi S.P."/>
        </authorList>
    </citation>
    <scope>IDENTIFICATION BY MASS SPECTROMETRY [LARGE SCALE ANALYSIS]</scope>
    <source>
        <tissue>Brain</tissue>
        <tissue>Brown adipose tissue</tissue>
        <tissue>Heart</tissue>
        <tissue>Kidney</tissue>
        <tissue>Liver</tissue>
        <tissue>Lung</tissue>
        <tissue>Pancreas</tissue>
        <tissue>Spleen</tissue>
        <tissue>Testis</tissue>
    </source>
</reference>
<reference key="7">
    <citation type="journal article" date="2012" name="J. Immunol.">
        <title>Stomatin-like protein 2 deficiency in T cells is associated with altered mitochondrial respiration and defective CD4+ T cell responses.</title>
        <authorList>
            <person name="Christie D.A."/>
            <person name="Mitsopoulos P."/>
            <person name="Blagih J."/>
            <person name="Dunn S.D."/>
            <person name="St-Pierre J."/>
            <person name="Jones R.G."/>
            <person name="Hatch G.M."/>
            <person name="Madrenas J."/>
        </authorList>
    </citation>
    <scope>FUNCTION</scope>
    <scope>DISRUPTION PHENOTYPE</scope>
</reference>
<reference key="8">
    <citation type="journal article" date="2012" name="PLoS ONE">
        <title>Mitochondrial and plasma membrane pools of stomatin-like protein 2 coalesce at the immunological synapse during T cell activation.</title>
        <authorList>
            <person name="Christie D.A."/>
            <person name="Kirchhof M.G."/>
            <person name="Vardhana S."/>
            <person name="Dustin M.L."/>
            <person name="Madrenas J."/>
        </authorList>
    </citation>
    <scope>SUBCELLULAR LOCATION</scope>
</reference>
<reference key="9">
    <citation type="journal article" date="2013" name="Mol. Cell">
        <title>SIRT5-mediated lysine desuccinylation impacts diverse metabolic pathways.</title>
        <authorList>
            <person name="Park J."/>
            <person name="Chen Y."/>
            <person name="Tishkoff D.X."/>
            <person name="Peng C."/>
            <person name="Tan M."/>
            <person name="Dai L."/>
            <person name="Xie Z."/>
            <person name="Zhang Y."/>
            <person name="Zwaans B.M."/>
            <person name="Skinner M.E."/>
            <person name="Lombard D.B."/>
            <person name="Zhao Y."/>
        </authorList>
    </citation>
    <scope>SUCCINYLATION [LARGE SCALE ANALYSIS] AT LYS-145</scope>
    <scope>IDENTIFICATION BY MASS SPECTROMETRY [LARGE SCALE ANALYSIS]</scope>
    <source>
        <tissue>Liver</tissue>
    </source>
</reference>
<reference key="10">
    <citation type="journal article" date="2013" name="Proc. Natl. Acad. Sci. U.S.A.">
        <title>Label-free quantitative proteomics of the lysine acetylome in mitochondria identifies substrates of SIRT3 in metabolic pathways.</title>
        <authorList>
            <person name="Rardin M.J."/>
            <person name="Newman J.C."/>
            <person name="Held J.M."/>
            <person name="Cusack M.P."/>
            <person name="Sorensen D.J."/>
            <person name="Li B."/>
            <person name="Schilling B."/>
            <person name="Mooney S.D."/>
            <person name="Kahn C.R."/>
            <person name="Verdin E."/>
            <person name="Gibson B.W."/>
        </authorList>
    </citation>
    <scope>ACETYLATION [LARGE SCALE ANALYSIS] AT LYS-145 AND LYS-233</scope>
    <scope>IDENTIFICATION BY MASS SPECTROMETRY [LARGE SCALE ANALYSIS]</scope>
    <source>
        <tissue>Liver</tissue>
    </source>
</reference>
<protein>
    <recommendedName>
        <fullName>Stomatin-like protein 2, mitochondrial</fullName>
        <shortName>SLP-2</shortName>
        <shortName>mslp2</shortName>
    </recommendedName>
</protein>
<feature type="transit peptide" description="Mitochondrion" evidence="3">
    <location>
        <begin position="1"/>
        <end position="28"/>
    </location>
</feature>
<feature type="chain" id="PRO_0000094032" description="Stomatin-like protein 2, mitochondrial">
    <location>
        <begin position="29"/>
        <end position="353"/>
    </location>
</feature>
<feature type="region of interest" description="Disordered" evidence="4">
    <location>
        <begin position="324"/>
        <end position="353"/>
    </location>
</feature>
<feature type="coiled-coil region" evidence="3">
    <location>
        <begin position="215"/>
        <end position="252"/>
    </location>
</feature>
<feature type="modified residue" description="Phosphoserine; by PKC/PRKCZ" evidence="2">
    <location>
        <position position="17"/>
    </location>
</feature>
<feature type="modified residue" description="Phosphotyrosine" evidence="2">
    <location>
        <position position="124"/>
    </location>
</feature>
<feature type="modified residue" description="N6-acetyllysine; alternate" evidence="10">
    <location>
        <position position="145"/>
    </location>
</feature>
<feature type="modified residue" description="N6-succinyllysine; alternate" evidence="11">
    <location>
        <position position="145"/>
    </location>
</feature>
<feature type="modified residue" description="N6-acetyllysine" evidence="10">
    <location>
        <position position="233"/>
    </location>
</feature>
<feature type="modified residue" description="Phosphoserine" evidence="2">
    <location>
        <position position="330"/>
    </location>
</feature>
<feature type="sequence conflict" description="In Ref. 2; BAB22363." evidence="9" ref="2">
    <original>A</original>
    <variation>R</variation>
    <location>
        <position position="5"/>
    </location>
</feature>
<feature type="sequence conflict" description="In Ref. 2; BAB22363." evidence="9" ref="2">
    <original>S</original>
    <variation>F</variation>
    <location>
        <position position="152"/>
    </location>
</feature>
<gene>
    <name type="primary">Stoml2</name>
    <name type="synonym">Slp2</name>
</gene>
<sequence length="353" mass="38385">MLARAARGTGALLLRGSVQASGRVPRRASSGLPRNTVILFVPQQEAWVVERMGRFHRILEPGLNVLIPVLDRIRYVQSLKEIVINVPEQSAVTLDNVTLQIDGVLYLRIMDPYKASYGVEDPEYAVTQLAQTTMRSELGKLSLDKVFRERESLNANIVDAINQAADCWGIRCLRYEIKDIHVPPRVKESMQMQVEAERRKRATVLESEGTRESAINVAEGKKQAQILASEAEKAEQINQAAGEASAVLAKAKAKAEAIRILAGALTQHNGDAAASLTVAEQYVSAFSKLAKDSNTVLLPSNPSDVTSMVAQAMGVYGALTKAPVPGAQNSSQSRRDVQATDTSIEELGRVKLS</sequence>
<evidence type="ECO:0000250" key="1"/>
<evidence type="ECO:0000250" key="2">
    <source>
        <dbReference type="UniProtKB" id="Q9UJZ1"/>
    </source>
</evidence>
<evidence type="ECO:0000255" key="3"/>
<evidence type="ECO:0000256" key="4">
    <source>
        <dbReference type="SAM" id="MobiDB-lite"/>
    </source>
</evidence>
<evidence type="ECO:0000269" key="5">
    <source>
    </source>
</evidence>
<evidence type="ECO:0000269" key="6">
    <source>
    </source>
</evidence>
<evidence type="ECO:0000269" key="7">
    <source>
    </source>
</evidence>
<evidence type="ECO:0000269" key="8">
    <source>
    </source>
</evidence>
<evidence type="ECO:0000305" key="9"/>
<evidence type="ECO:0007744" key="10">
    <source>
    </source>
</evidence>
<evidence type="ECO:0007744" key="11">
    <source>
    </source>
</evidence>
<accession>Q99JB2</accession>
<accession>Q9DCG8</accession>
<proteinExistence type="evidence at protein level"/>
<dbReference type="EMBL" id="AF323178">
    <property type="protein sequence ID" value="AAG53404.1"/>
    <property type="molecule type" value="mRNA"/>
</dbReference>
<dbReference type="EMBL" id="AK002793">
    <property type="protein sequence ID" value="BAB22363.1"/>
    <property type="molecule type" value="mRNA"/>
</dbReference>
<dbReference type="EMBL" id="BC003425">
    <property type="protein sequence ID" value="AAH03425.1"/>
    <property type="molecule type" value="mRNA"/>
</dbReference>
<dbReference type="EMBL" id="BC069941">
    <property type="protein sequence ID" value="AAH69941.1"/>
    <property type="molecule type" value="mRNA"/>
</dbReference>
<dbReference type="CCDS" id="CCDS18089.1"/>
<dbReference type="RefSeq" id="NP_075720.1">
    <property type="nucleotide sequence ID" value="NM_023231.3"/>
</dbReference>
<dbReference type="SMR" id="Q99JB2"/>
<dbReference type="BioGRID" id="211578">
    <property type="interactions" value="14"/>
</dbReference>
<dbReference type="FunCoup" id="Q99JB2">
    <property type="interactions" value="3106"/>
</dbReference>
<dbReference type="IntAct" id="Q99JB2">
    <property type="interactions" value="5"/>
</dbReference>
<dbReference type="MINT" id="Q99JB2"/>
<dbReference type="STRING" id="10090.ENSMUSP00000030169"/>
<dbReference type="GlyGen" id="Q99JB2">
    <property type="glycosylation" value="1 site, 1 O-linked glycan (1 site)"/>
</dbReference>
<dbReference type="iPTMnet" id="Q99JB2"/>
<dbReference type="PhosphoSitePlus" id="Q99JB2"/>
<dbReference type="SwissPalm" id="Q99JB2"/>
<dbReference type="REPRODUCTION-2DPAGE" id="Q99JB2"/>
<dbReference type="jPOST" id="Q99JB2"/>
<dbReference type="PaxDb" id="10090-ENSMUSP00000030169"/>
<dbReference type="PeptideAtlas" id="Q99JB2"/>
<dbReference type="ProteomicsDB" id="258640"/>
<dbReference type="Pumba" id="Q99JB2"/>
<dbReference type="Antibodypedia" id="25758">
    <property type="antibodies" value="279 antibodies from 30 providers"/>
</dbReference>
<dbReference type="DNASU" id="66592"/>
<dbReference type="Ensembl" id="ENSMUST00000030169.15">
    <property type="protein sequence ID" value="ENSMUSP00000030169.9"/>
    <property type="gene ID" value="ENSMUSG00000028455.16"/>
</dbReference>
<dbReference type="GeneID" id="66592"/>
<dbReference type="KEGG" id="mmu:66592"/>
<dbReference type="UCSC" id="uc008soy.1">
    <property type="organism name" value="mouse"/>
</dbReference>
<dbReference type="AGR" id="MGI:1913842"/>
<dbReference type="CTD" id="30968"/>
<dbReference type="MGI" id="MGI:1913842">
    <property type="gene designation" value="Stoml2"/>
</dbReference>
<dbReference type="VEuPathDB" id="HostDB:ENSMUSG00000028455"/>
<dbReference type="eggNOG" id="KOG2620">
    <property type="taxonomic scope" value="Eukaryota"/>
</dbReference>
<dbReference type="GeneTree" id="ENSGT01030000234614"/>
<dbReference type="HOGENOM" id="CLU_024949_1_0_1"/>
<dbReference type="InParanoid" id="Q99JB2"/>
<dbReference type="OMA" id="YLQMLPK"/>
<dbReference type="OrthoDB" id="434619at2759"/>
<dbReference type="PhylomeDB" id="Q99JB2"/>
<dbReference type="TreeFam" id="TF105750"/>
<dbReference type="Reactome" id="R-MMU-8949664">
    <property type="pathway name" value="Processing of SMDT1"/>
</dbReference>
<dbReference type="Reactome" id="R-MMU-9840373">
    <property type="pathway name" value="Cellular response to mitochondrial stress"/>
</dbReference>
<dbReference type="BioGRID-ORCS" id="66592">
    <property type="hits" value="11 hits in 76 CRISPR screens"/>
</dbReference>
<dbReference type="CD-CODE" id="CE726F99">
    <property type="entry name" value="Postsynaptic density"/>
</dbReference>
<dbReference type="ChiTaRS" id="Stoml2">
    <property type="organism name" value="mouse"/>
</dbReference>
<dbReference type="PRO" id="PR:Q99JB2"/>
<dbReference type="Proteomes" id="UP000000589">
    <property type="component" value="Chromosome 4"/>
</dbReference>
<dbReference type="RNAct" id="Q99JB2">
    <property type="molecule type" value="protein"/>
</dbReference>
<dbReference type="Bgee" id="ENSMUSG00000028455">
    <property type="expression patterns" value="Expressed in epiblast (generic) and 70 other cell types or tissues"/>
</dbReference>
<dbReference type="ExpressionAtlas" id="Q99JB2">
    <property type="expression patterns" value="baseline and differential"/>
</dbReference>
<dbReference type="GO" id="GO:0015629">
    <property type="term" value="C:actin cytoskeleton"/>
    <property type="evidence" value="ECO:0000250"/>
    <property type="project" value="UniProtKB"/>
</dbReference>
<dbReference type="GO" id="GO:0001772">
    <property type="term" value="C:immunological synapse"/>
    <property type="evidence" value="ECO:0000250"/>
    <property type="project" value="UniProtKB"/>
</dbReference>
<dbReference type="GO" id="GO:0045121">
    <property type="term" value="C:membrane raft"/>
    <property type="evidence" value="ECO:0000250"/>
    <property type="project" value="UniProtKB"/>
</dbReference>
<dbReference type="GO" id="GO:0005743">
    <property type="term" value="C:mitochondrial inner membrane"/>
    <property type="evidence" value="ECO:0007005"/>
    <property type="project" value="MGI"/>
</dbReference>
<dbReference type="GO" id="GO:0005758">
    <property type="term" value="C:mitochondrial intermembrane space"/>
    <property type="evidence" value="ECO:0000250"/>
    <property type="project" value="UniProtKB"/>
</dbReference>
<dbReference type="GO" id="GO:0005739">
    <property type="term" value="C:mitochondrion"/>
    <property type="evidence" value="ECO:0000314"/>
    <property type="project" value="UniProtKB"/>
</dbReference>
<dbReference type="GO" id="GO:0005886">
    <property type="term" value="C:plasma membrane"/>
    <property type="evidence" value="ECO:0000314"/>
    <property type="project" value="UniProtKB"/>
</dbReference>
<dbReference type="GO" id="GO:1901612">
    <property type="term" value="F:cardiolipin binding"/>
    <property type="evidence" value="ECO:0000250"/>
    <property type="project" value="UniProtKB"/>
</dbReference>
<dbReference type="GO" id="GO:0051020">
    <property type="term" value="F:GTPase binding"/>
    <property type="evidence" value="ECO:0007669"/>
    <property type="project" value="Ensembl"/>
</dbReference>
<dbReference type="GO" id="GO:0042608">
    <property type="term" value="F:T cell receptor binding"/>
    <property type="evidence" value="ECO:0000250"/>
    <property type="project" value="UniProtKB"/>
</dbReference>
<dbReference type="GO" id="GO:0035710">
    <property type="term" value="P:CD4-positive, alpha-beta T cell activation"/>
    <property type="evidence" value="ECO:0000315"/>
    <property type="project" value="UniProtKB"/>
</dbReference>
<dbReference type="GO" id="GO:0006874">
    <property type="term" value="P:intracellular calcium ion homeostasis"/>
    <property type="evidence" value="ECO:0000250"/>
    <property type="project" value="UniProtKB"/>
</dbReference>
<dbReference type="GO" id="GO:0010876">
    <property type="term" value="P:lipid localization"/>
    <property type="evidence" value="ECO:0000315"/>
    <property type="project" value="UniProtKB"/>
</dbReference>
<dbReference type="GO" id="GO:0034982">
    <property type="term" value="P:mitochondrial protein processing"/>
    <property type="evidence" value="ECO:0000315"/>
    <property type="project" value="UniProtKB"/>
</dbReference>
<dbReference type="GO" id="GO:0007005">
    <property type="term" value="P:mitochondrion organization"/>
    <property type="evidence" value="ECO:0000250"/>
    <property type="project" value="UniProtKB"/>
</dbReference>
<dbReference type="GO" id="GO:0032743">
    <property type="term" value="P:positive regulation of interleukin-2 production"/>
    <property type="evidence" value="ECO:0000315"/>
    <property type="project" value="UniProtKB"/>
</dbReference>
<dbReference type="GO" id="GO:0051259">
    <property type="term" value="P:protein complex oligomerization"/>
    <property type="evidence" value="ECO:0000250"/>
    <property type="project" value="UniProtKB"/>
</dbReference>
<dbReference type="GO" id="GO:0042776">
    <property type="term" value="P:proton motive force-driven mitochondrial ATP synthesis"/>
    <property type="evidence" value="ECO:0000315"/>
    <property type="project" value="UniProtKB"/>
</dbReference>
<dbReference type="GO" id="GO:1990046">
    <property type="term" value="P:stress-induced mitochondrial fusion"/>
    <property type="evidence" value="ECO:0000315"/>
    <property type="project" value="UniProtKB"/>
</dbReference>
<dbReference type="GO" id="GO:0050852">
    <property type="term" value="P:T cell receptor signaling pathway"/>
    <property type="evidence" value="ECO:0000250"/>
    <property type="project" value="UniProtKB"/>
</dbReference>
<dbReference type="CDD" id="cd08829">
    <property type="entry name" value="SPFH_paraslipin"/>
    <property type="match status" value="1"/>
</dbReference>
<dbReference type="FunFam" id="3.30.479.30:FF:000008">
    <property type="entry name" value="Stomatin-like protein 2, mitochondrial"/>
    <property type="match status" value="1"/>
</dbReference>
<dbReference type="Gene3D" id="3.30.479.30">
    <property type="entry name" value="Band 7 domain"/>
    <property type="match status" value="1"/>
</dbReference>
<dbReference type="InterPro" id="IPR050710">
    <property type="entry name" value="Band7/mec-2_domain"/>
</dbReference>
<dbReference type="InterPro" id="IPR001107">
    <property type="entry name" value="Band_7"/>
</dbReference>
<dbReference type="InterPro" id="IPR036013">
    <property type="entry name" value="Band_7/SPFH_dom_sf"/>
</dbReference>
<dbReference type="InterPro" id="IPR032435">
    <property type="entry name" value="STML2-like_C"/>
</dbReference>
<dbReference type="InterPro" id="IPR001972">
    <property type="entry name" value="Stomatin_HflK_fam"/>
</dbReference>
<dbReference type="PANTHER" id="PTHR43327">
    <property type="entry name" value="STOMATIN-LIKE PROTEIN 2, MITOCHONDRIAL"/>
    <property type="match status" value="1"/>
</dbReference>
<dbReference type="PANTHER" id="PTHR43327:SF10">
    <property type="entry name" value="STOMATIN-LIKE PROTEIN 2, MITOCHONDRIAL"/>
    <property type="match status" value="1"/>
</dbReference>
<dbReference type="Pfam" id="PF01145">
    <property type="entry name" value="Band_7"/>
    <property type="match status" value="1"/>
</dbReference>
<dbReference type="Pfam" id="PF16200">
    <property type="entry name" value="Band_7_C"/>
    <property type="match status" value="1"/>
</dbReference>
<dbReference type="PRINTS" id="PR00721">
    <property type="entry name" value="STOMATIN"/>
</dbReference>
<dbReference type="SMART" id="SM00244">
    <property type="entry name" value="PHB"/>
    <property type="match status" value="1"/>
</dbReference>
<dbReference type="SUPFAM" id="SSF117892">
    <property type="entry name" value="Band 7/SPFH domain"/>
    <property type="match status" value="1"/>
</dbReference>
<comment type="function">
    <text evidence="6 8">Mitochondrial protein that probably regulates the biogenesis and the activity of mitochondria. Stimulates cardiolipin biosynthesis, binds cardiolipin-enriched membranes where it recruits and stabilizes some proteins including prohibitin and may therefore act in the organization of functional microdomains in mitochondrial membranes. Through regulation of the mitochondrial function may play a role into several biological processes including cell migration, cell proliferation, T-cell activation, calcium homeostasis and cellular response to stress. May play a role in calcium homeostasis through negative regulation of calcium efflux from mitochondria. Required for mitochondrial hyperfusion a pro-survival cellular response to stress which results in increased ATP production by mitochondria. May also regulate the organization of functional domains at the plasma membrane and play a role in T-cell activation through association with the T-cell receptor signaling complex and its regulation.</text>
</comment>
<comment type="subunit">
    <text evidence="1 5">Forms homooligomers (By similarity). Interacts with MFN2; may form heterooligomers (By similarity). Interacts with PHB1 and PHB2; recruits them to cardiolipin-enriched mitochondrial membranes and stabilizes them (By similarity). Interacts with CACNA2D2.</text>
</comment>
<comment type="subcellular location">
    <subcellularLocation>
        <location evidence="7">Cell membrane</location>
        <topology evidence="2">Peripheral membrane protein</topology>
    </subcellularLocation>
    <subcellularLocation>
        <location evidence="7">Mitochondrion</location>
    </subcellularLocation>
    <subcellularLocation>
        <location evidence="2">Mitochondrion inner membrane</location>
        <topology evidence="2">Lipid-anchor</topology>
    </subcellularLocation>
    <subcellularLocation>
        <location evidence="2">Mitochondrion intermembrane space</location>
    </subcellularLocation>
    <subcellularLocation>
        <location evidence="2">Membrane raft</location>
    </subcellularLocation>
    <subcellularLocation>
        <location evidence="2">Cytoplasm</location>
        <location evidence="2">Cytoskeleton</location>
    </subcellularLocation>
    <text evidence="2">Behaves as an integral membrane protein of the mitochondrion despite the absence of a detectable transmembrane domain. Also associates with the actin cytoskeleton and membrane rafts in activated T-cells. A minor pool is associated with the plasma membrane and is enriched at the immunological synapse in activated T-cells.</text>
</comment>
<comment type="disruption phenotype">
    <text evidence="8">Embryonic lethal at the preimplantation stage. T-cell-specific conditional knockout does not alter the normal development of those cells but decreases their responses to stimulation through the T-cell receptor.</text>
</comment>
<comment type="similarity">
    <text evidence="9">Belongs to the band 7/mec-2 family.</text>
</comment>
<organism>
    <name type="scientific">Mus musculus</name>
    <name type="common">Mouse</name>
    <dbReference type="NCBI Taxonomy" id="10090"/>
    <lineage>
        <taxon>Eukaryota</taxon>
        <taxon>Metazoa</taxon>
        <taxon>Chordata</taxon>
        <taxon>Craniata</taxon>
        <taxon>Vertebrata</taxon>
        <taxon>Euteleostomi</taxon>
        <taxon>Mammalia</taxon>
        <taxon>Eutheria</taxon>
        <taxon>Euarchontoglires</taxon>
        <taxon>Glires</taxon>
        <taxon>Rodentia</taxon>
        <taxon>Myomorpha</taxon>
        <taxon>Muroidea</taxon>
        <taxon>Muridae</taxon>
        <taxon>Murinae</taxon>
        <taxon>Mus</taxon>
        <taxon>Mus</taxon>
    </lineage>
</organism>
<name>STML2_MOUSE</name>
<keyword id="KW-0007">Acetylation</keyword>
<keyword id="KW-1003">Cell membrane</keyword>
<keyword id="KW-0175">Coiled coil</keyword>
<keyword id="KW-0963">Cytoplasm</keyword>
<keyword id="KW-0206">Cytoskeleton</keyword>
<keyword id="KW-0446">Lipid-binding</keyword>
<keyword id="KW-0449">Lipoprotein</keyword>
<keyword id="KW-0472">Membrane</keyword>
<keyword id="KW-0496">Mitochondrion</keyword>
<keyword id="KW-0999">Mitochondrion inner membrane</keyword>
<keyword id="KW-0597">Phosphoprotein</keyword>
<keyword id="KW-1185">Reference proteome</keyword>
<keyword id="KW-0809">Transit peptide</keyword>